<accession>Q9Y2K6</accession>
<accession>Q541F1</accession>
<accession>Q8IXQ1</accession>
<accession>Q96LG5</accession>
<accession>Q9UQN8</accession>
<accession>Q9UQP0</accession>
<sequence>MGDSRDLCPHLDSIGEVTKEDLLLKSKGTCQSCGVTGPNLWACLQVACPYVGCGESFADHSTIHAQAKKHNLTVNLTTFRLWCYACEKEVFLEQRLAAPLLGSSSKFSEQDSPPPSHPLKAVPIAVADEGESESEDDDLKPRGLTGMKNLGNSCYMNAALQALSNCPPLTQFFLECGGLVRTDKKPALCKSYQKLVSEVWHKKRPSYVVPTSLSHGIKLVNPMFRGYAQQDTQEFLRCLMDQLHEELKEPVVATVALTEARDSDSSDTDEKREGDRSPSEDEFLSCDSSSDRGEGDGQGRGGGSSQAETELLIPDEAGRAISEKERMKDRKFSWGQQRTNSEQVDEDADVDTAMAALDDQPAEAQPPSPRSSSPCRTPEPDNDAHLRSSSRPCSPVHHHEGHAKLSSSPPRASPVRMAPSYVLKKAQVLSAGSRRRKEQRYRSVISDIFDGSILSLVQCLTCDRVSTTVETFQDLSLPIPGKEDLAKLHSAIYQNVPAKPGACGDSYAAQGWLAFIVEYIRRFVVSCTPSWFWGPVVTLEDCLAAFFAADELKGDNMYSCERCKKLRNGVKYCKVLRLPEILCIHLKRFRHEVMYSFKINSHVSFPLEGLDLRPFLAKECTSQITTYDLLSVICHHGTAGSGHYIAYCQNVINGQWYEFDDQYVTEVHETVVQNAEGYVLFYRKSSEEAMRERQQVVSLAAMREPSLLRFYVSREWLNKFNTFAEPGPITNQTFLCSHGGIPPHKYHYIDDLVVILPQNVWEHLYNRFGGGPAVNHLYVCSICQVEIEALAKRRRIEIDTFIKLNKAFQAEESPGVIYCISMQWFREWEAFVKGKDNEPPGPIDNSRIAQVKGSGHVQLKQGADYGQISEETWTYLNSLYGGGPEIAIRQSVAQPLGPENLHGEQKIEAETRAV</sequence>
<feature type="chain" id="PRO_0000080647" description="Ubiquitin carboxyl-terminal hydrolase 20">
    <location>
        <begin position="1"/>
        <end position="914"/>
    </location>
</feature>
<feature type="domain" description="USP">
    <location>
        <begin position="145"/>
        <end position="685"/>
    </location>
</feature>
<feature type="domain" description="DUSP 1" evidence="4">
    <location>
        <begin position="687"/>
        <end position="780"/>
    </location>
</feature>
<feature type="domain" description="DUSP 2" evidence="4">
    <location>
        <begin position="789"/>
        <end position="892"/>
    </location>
</feature>
<feature type="zinc finger region" description="UBP-type" evidence="3">
    <location>
        <begin position="6"/>
        <end position="111"/>
    </location>
</feature>
<feature type="region of interest" description="Disordered" evidence="7">
    <location>
        <begin position="257"/>
        <end position="347"/>
    </location>
</feature>
<feature type="region of interest" description="Disordered" evidence="7">
    <location>
        <begin position="360"/>
        <end position="415"/>
    </location>
</feature>
<feature type="compositionally biased region" description="Basic and acidic residues" evidence="7">
    <location>
        <begin position="259"/>
        <end position="279"/>
    </location>
</feature>
<feature type="compositionally biased region" description="Basic and acidic residues" evidence="7">
    <location>
        <begin position="316"/>
        <end position="332"/>
    </location>
</feature>
<feature type="active site" description="Nucleophile">
    <location>
        <position position="154"/>
    </location>
</feature>
<feature type="active site" description="Proton acceptor" evidence="5 6">
    <location>
        <position position="643"/>
    </location>
</feature>
<feature type="binding site" evidence="3">
    <location>
        <position position="8"/>
    </location>
    <ligand>
        <name>Zn(2+)</name>
        <dbReference type="ChEBI" id="CHEBI:29105"/>
        <label>1</label>
    </ligand>
</feature>
<feature type="binding site" evidence="3">
    <location>
        <position position="10"/>
    </location>
    <ligand>
        <name>Zn(2+)</name>
        <dbReference type="ChEBI" id="CHEBI:29105"/>
        <label>1</label>
    </ligand>
</feature>
<feature type="binding site" evidence="3">
    <location>
        <position position="30"/>
    </location>
    <ligand>
        <name>Zn(2+)</name>
        <dbReference type="ChEBI" id="CHEBI:29105"/>
        <label>2</label>
    </ligand>
</feature>
<feature type="binding site" evidence="3">
    <location>
        <position position="33"/>
    </location>
    <ligand>
        <name>Zn(2+)</name>
        <dbReference type="ChEBI" id="CHEBI:29105"/>
        <label>2</label>
    </ligand>
</feature>
<feature type="binding site" evidence="3">
    <location>
        <position position="43"/>
    </location>
    <ligand>
        <name>Zn(2+)</name>
        <dbReference type="ChEBI" id="CHEBI:29105"/>
        <label>3</label>
    </ligand>
</feature>
<feature type="binding site" evidence="3">
    <location>
        <position position="48"/>
    </location>
    <ligand>
        <name>Zn(2+)</name>
        <dbReference type="ChEBI" id="CHEBI:29105"/>
        <label>3</label>
    </ligand>
</feature>
<feature type="binding site" evidence="3">
    <location>
        <position position="53"/>
    </location>
    <ligand>
        <name>Zn(2+)</name>
        <dbReference type="ChEBI" id="CHEBI:29105"/>
        <label>2</label>
    </ligand>
</feature>
<feature type="binding site" evidence="3">
    <location>
        <position position="60"/>
    </location>
    <ligand>
        <name>Zn(2+)</name>
        <dbReference type="ChEBI" id="CHEBI:29105"/>
        <label>2</label>
    </ligand>
</feature>
<feature type="binding site" evidence="3">
    <location>
        <position position="64"/>
    </location>
    <ligand>
        <name>Zn(2+)</name>
        <dbReference type="ChEBI" id="CHEBI:29105"/>
        <label>3</label>
    </ligand>
</feature>
<feature type="binding site" evidence="3">
    <location>
        <position position="70"/>
    </location>
    <ligand>
        <name>Zn(2+)</name>
        <dbReference type="ChEBI" id="CHEBI:29105"/>
        <label>3</label>
    </ligand>
</feature>
<feature type="binding site" evidence="3">
    <location>
        <position position="83"/>
    </location>
    <ligand>
        <name>Zn(2+)</name>
        <dbReference type="ChEBI" id="CHEBI:29105"/>
        <label>1</label>
    </ligand>
</feature>
<feature type="binding site" evidence="3">
    <location>
        <position position="86"/>
    </location>
    <ligand>
        <name>Zn(2+)</name>
        <dbReference type="ChEBI" id="CHEBI:29105"/>
        <label>1</label>
    </ligand>
</feature>
<feature type="modified residue" description="Phosphoserine" evidence="25">
    <location>
        <position position="112"/>
    </location>
</feature>
<feature type="modified residue" description="Phosphoserine" evidence="23 24 25 26">
    <location>
        <position position="132"/>
    </location>
</feature>
<feature type="modified residue" description="Phosphoserine" evidence="23 24 25 26">
    <location>
        <position position="134"/>
    </location>
</feature>
<feature type="modified residue" description="Phosphothreonine" evidence="21">
    <location>
        <position position="258"/>
    </location>
</feature>
<feature type="modified residue" description="Phosphoserine" evidence="25">
    <location>
        <position position="305"/>
    </location>
</feature>
<feature type="modified residue" description="Phosphoserine" evidence="2">
    <location>
        <position position="368"/>
    </location>
</feature>
<feature type="modified residue" description="Phosphothreonine" evidence="22 25">
    <location>
        <position position="377"/>
    </location>
</feature>
<feature type="modified residue" description="Phosphoserine" evidence="25">
    <location>
        <position position="408"/>
    </location>
</feature>
<feature type="modified residue" description="Phosphoserine" evidence="22 25">
    <location>
        <position position="413"/>
    </location>
</feature>
<feature type="sequence variant" id="VAR_051529" description="In dbSNP:rs36086252.">
    <original>S</original>
    <variation>Y</variation>
    <location>
        <position position="103"/>
    </location>
</feature>
<feature type="sequence variant" id="VAR_051530" description="In dbSNP:rs36055332.">
    <original>V</original>
    <variation>I</variation>
    <location>
        <position position="444"/>
    </location>
</feature>
<feature type="mutagenesis site" description="Abolishes deubiquitinating activity. Does not inhibit lysosomal trafficking of ADRB2; when associated with Q-643." evidence="11 16 19">
    <original>C</original>
    <variation>S</variation>
    <location>
        <position position="154"/>
    </location>
</feature>
<feature type="mutagenesis site" description="Abolishes deubiquitinating activity. Does not inhibit lysosomal trafficking of ADRB2; when associated with S-154." evidence="11 16">
    <original>H</original>
    <variation>Q</variation>
    <location>
        <position position="643"/>
    </location>
</feature>
<feature type="sequence conflict" description="In Ref. 1; AAL79676 and 2; BAA76847." evidence="20" ref="1 2">
    <original>A</original>
    <variation>V</variation>
    <location>
        <position position="320"/>
    </location>
</feature>
<feature type="sequence conflict" description="In Ref. 1; AAL79676, 2; BAA76847, 4; EAW87914 and 5; AAH39593." evidence="20" ref="1 2 4 5">
    <location>
        <position position="359"/>
    </location>
</feature>
<feature type="sequence conflict" description="In Ref. 6; CAB44350." evidence="20" ref="6">
    <original>H</original>
    <variation>Q</variation>
    <location>
        <position position="776"/>
    </location>
</feature>
<feature type="sequence conflict" description="In Ref. 6; CAB44350." evidence="20" ref="6">
    <original>R</original>
    <variation>M</variation>
    <location>
        <position position="794"/>
    </location>
</feature>
<feature type="strand" evidence="27">
    <location>
        <begin position="4"/>
        <end position="7"/>
    </location>
</feature>
<feature type="turn" evidence="27">
    <location>
        <begin position="10"/>
        <end position="13"/>
    </location>
</feature>
<feature type="helix" evidence="27">
    <location>
        <begin position="19"/>
        <end position="25"/>
    </location>
</feature>
<feature type="turn" evidence="27">
    <location>
        <begin position="31"/>
        <end position="33"/>
    </location>
</feature>
<feature type="strand" evidence="27">
    <location>
        <begin position="41"/>
        <end position="43"/>
    </location>
</feature>
<feature type="turn" evidence="27">
    <location>
        <begin position="55"/>
        <end position="58"/>
    </location>
</feature>
<feature type="helix" evidence="27">
    <location>
        <begin position="60"/>
        <end position="67"/>
    </location>
</feature>
<feature type="strand" evidence="27">
    <location>
        <begin position="72"/>
        <end position="74"/>
    </location>
</feature>
<feature type="turn" evidence="27">
    <location>
        <begin position="76"/>
        <end position="78"/>
    </location>
</feature>
<feature type="strand" evidence="27">
    <location>
        <begin position="81"/>
        <end position="83"/>
    </location>
</feature>
<feature type="turn" evidence="27">
    <location>
        <begin position="84"/>
        <end position="87"/>
    </location>
</feature>
<feature type="strand" evidence="27">
    <location>
        <begin position="88"/>
        <end position="90"/>
    </location>
</feature>
<organism>
    <name type="scientific">Homo sapiens</name>
    <name type="common">Human</name>
    <dbReference type="NCBI Taxonomy" id="9606"/>
    <lineage>
        <taxon>Eukaryota</taxon>
        <taxon>Metazoa</taxon>
        <taxon>Chordata</taxon>
        <taxon>Craniata</taxon>
        <taxon>Vertebrata</taxon>
        <taxon>Euteleostomi</taxon>
        <taxon>Mammalia</taxon>
        <taxon>Eutheria</taxon>
        <taxon>Euarchontoglires</taxon>
        <taxon>Primates</taxon>
        <taxon>Haplorrhini</taxon>
        <taxon>Catarrhini</taxon>
        <taxon>Hominidae</taxon>
        <taxon>Homo</taxon>
    </lineage>
</organism>
<evidence type="ECO:0000250" key="1"/>
<evidence type="ECO:0000250" key="2">
    <source>
        <dbReference type="UniProtKB" id="Q8C6M1"/>
    </source>
</evidence>
<evidence type="ECO:0000255" key="3">
    <source>
        <dbReference type="PROSITE-ProRule" id="PRU00502"/>
    </source>
</evidence>
<evidence type="ECO:0000255" key="4">
    <source>
        <dbReference type="PROSITE-ProRule" id="PRU00613"/>
    </source>
</evidence>
<evidence type="ECO:0000255" key="5">
    <source>
        <dbReference type="PROSITE-ProRule" id="PRU10092"/>
    </source>
</evidence>
<evidence type="ECO:0000255" key="6">
    <source>
        <dbReference type="PROSITE-ProRule" id="PRU10093"/>
    </source>
</evidence>
<evidence type="ECO:0000256" key="7">
    <source>
        <dbReference type="SAM" id="MobiDB-lite"/>
    </source>
</evidence>
<evidence type="ECO:0000269" key="8">
    <source>
    </source>
</evidence>
<evidence type="ECO:0000269" key="9">
    <source>
    </source>
</evidence>
<evidence type="ECO:0000269" key="10">
    <source>
    </source>
</evidence>
<evidence type="ECO:0000269" key="11">
    <source>
    </source>
</evidence>
<evidence type="ECO:0000269" key="12">
    <source>
    </source>
</evidence>
<evidence type="ECO:0000269" key="13">
    <source>
    </source>
</evidence>
<evidence type="ECO:0000269" key="14">
    <source>
    </source>
</evidence>
<evidence type="ECO:0000269" key="15">
    <source>
    </source>
</evidence>
<evidence type="ECO:0000269" key="16">
    <source>
    </source>
</evidence>
<evidence type="ECO:0000269" key="17">
    <source>
    </source>
</evidence>
<evidence type="ECO:0000269" key="18">
    <source>
    </source>
</evidence>
<evidence type="ECO:0000269" key="19">
    <source>
    </source>
</evidence>
<evidence type="ECO:0000305" key="20"/>
<evidence type="ECO:0007744" key="21">
    <source>
    </source>
</evidence>
<evidence type="ECO:0007744" key="22">
    <source>
    </source>
</evidence>
<evidence type="ECO:0007744" key="23">
    <source>
    </source>
</evidence>
<evidence type="ECO:0007744" key="24">
    <source>
    </source>
</evidence>
<evidence type="ECO:0007744" key="25">
    <source>
    </source>
</evidence>
<evidence type="ECO:0007744" key="26">
    <source>
    </source>
</evidence>
<evidence type="ECO:0007829" key="27">
    <source>
        <dbReference type="PDB" id="6KCZ"/>
    </source>
</evidence>
<proteinExistence type="evidence at protein level"/>
<keyword id="KW-0002">3D-structure</keyword>
<keyword id="KW-0963">Cytoplasm</keyword>
<keyword id="KW-0206">Cytoskeleton</keyword>
<keyword id="KW-0254">Endocytosis</keyword>
<keyword id="KW-0256">Endoplasmic reticulum</keyword>
<keyword id="KW-0378">Hydrolase</keyword>
<keyword id="KW-0479">Metal-binding</keyword>
<keyword id="KW-0597">Phosphoprotein</keyword>
<keyword id="KW-0645">Protease</keyword>
<keyword id="KW-1267">Proteomics identification</keyword>
<keyword id="KW-1185">Reference proteome</keyword>
<keyword id="KW-0677">Repeat</keyword>
<keyword id="KW-0788">Thiol protease</keyword>
<keyword id="KW-0832">Ubl conjugation</keyword>
<keyword id="KW-0833">Ubl conjugation pathway</keyword>
<keyword id="KW-0862">Zinc</keyword>
<keyword id="KW-0863">Zinc-finger</keyword>
<protein>
    <recommendedName>
        <fullName>Ubiquitin carboxyl-terminal hydrolase 20</fullName>
        <ecNumber evidence="14 15 16 17 19">3.4.19.12</ecNumber>
    </recommendedName>
    <alternativeName>
        <fullName>Deubiquitinating enzyme 20</fullName>
    </alternativeName>
    <alternativeName>
        <fullName>Ubiquitin thioesterase 20</fullName>
    </alternativeName>
    <alternativeName>
        <fullName>Ubiquitin-specific-processing protease 20</fullName>
    </alternativeName>
    <alternativeName>
        <fullName>VHL-interacting deubiquitinating enzyme 2</fullName>
        <shortName>hVDU2</shortName>
    </alternativeName>
</protein>
<name>UBP20_HUMAN</name>
<reference key="1">
    <citation type="journal article" date="2002" name="Biochem. Biophys. Res. Commun.">
        <title>Identification of a deubiquitinating enzyme subfamily as substrates of the von Hippel-Lindau tumor suppressor.</title>
        <authorList>
            <person name="Li Z."/>
            <person name="Wang D."/>
            <person name="Na X."/>
            <person name="Schoen S.R."/>
            <person name="Messing E.M."/>
            <person name="Wu G."/>
        </authorList>
    </citation>
    <scope>NUCLEOTIDE SEQUENCE [MRNA]</scope>
    <scope>FUNCTION</scope>
    <scope>UBIQUITINATION</scope>
    <scope>INTERACTION WITH VHL</scope>
</reference>
<reference key="2">
    <citation type="journal article" date="1999" name="DNA Res.">
        <title>Prediction of the coding sequences of unidentified human genes. XIII. The complete sequences of 100 new cDNA clones from brain which code for large proteins in vitro.</title>
        <authorList>
            <person name="Nagase T."/>
            <person name="Ishikawa K."/>
            <person name="Suyama M."/>
            <person name="Kikuno R."/>
            <person name="Hirosawa M."/>
            <person name="Miyajima N."/>
            <person name="Tanaka A."/>
            <person name="Kotani H."/>
            <person name="Nomura N."/>
            <person name="Ohara O."/>
        </authorList>
    </citation>
    <scope>NUCLEOTIDE SEQUENCE [LARGE SCALE MRNA]</scope>
    <source>
        <tissue>Brain</tissue>
    </source>
</reference>
<reference key="3">
    <citation type="journal article" date="2004" name="Nature">
        <title>DNA sequence and analysis of human chromosome 9.</title>
        <authorList>
            <person name="Humphray S.J."/>
            <person name="Oliver K."/>
            <person name="Hunt A.R."/>
            <person name="Plumb R.W."/>
            <person name="Loveland J.E."/>
            <person name="Howe K.L."/>
            <person name="Andrews T.D."/>
            <person name="Searle S."/>
            <person name="Hunt S.E."/>
            <person name="Scott C.E."/>
            <person name="Jones M.C."/>
            <person name="Ainscough R."/>
            <person name="Almeida J.P."/>
            <person name="Ambrose K.D."/>
            <person name="Ashwell R.I.S."/>
            <person name="Babbage A.K."/>
            <person name="Babbage S."/>
            <person name="Bagguley C.L."/>
            <person name="Bailey J."/>
            <person name="Banerjee R."/>
            <person name="Barker D.J."/>
            <person name="Barlow K.F."/>
            <person name="Bates K."/>
            <person name="Beasley H."/>
            <person name="Beasley O."/>
            <person name="Bird C.P."/>
            <person name="Bray-Allen S."/>
            <person name="Brown A.J."/>
            <person name="Brown J.Y."/>
            <person name="Burford D."/>
            <person name="Burrill W."/>
            <person name="Burton J."/>
            <person name="Carder C."/>
            <person name="Carter N.P."/>
            <person name="Chapman J.C."/>
            <person name="Chen Y."/>
            <person name="Clarke G."/>
            <person name="Clark S.Y."/>
            <person name="Clee C.M."/>
            <person name="Clegg S."/>
            <person name="Collier R.E."/>
            <person name="Corby N."/>
            <person name="Crosier M."/>
            <person name="Cummings A.T."/>
            <person name="Davies J."/>
            <person name="Dhami P."/>
            <person name="Dunn M."/>
            <person name="Dutta I."/>
            <person name="Dyer L.W."/>
            <person name="Earthrowl M.E."/>
            <person name="Faulkner L."/>
            <person name="Fleming C.J."/>
            <person name="Frankish A."/>
            <person name="Frankland J.A."/>
            <person name="French L."/>
            <person name="Fricker D.G."/>
            <person name="Garner P."/>
            <person name="Garnett J."/>
            <person name="Ghori J."/>
            <person name="Gilbert J.G.R."/>
            <person name="Glison C."/>
            <person name="Grafham D.V."/>
            <person name="Gribble S."/>
            <person name="Griffiths C."/>
            <person name="Griffiths-Jones S."/>
            <person name="Grocock R."/>
            <person name="Guy J."/>
            <person name="Hall R.E."/>
            <person name="Hammond S."/>
            <person name="Harley J.L."/>
            <person name="Harrison E.S.I."/>
            <person name="Hart E.A."/>
            <person name="Heath P.D."/>
            <person name="Henderson C.D."/>
            <person name="Hopkins B.L."/>
            <person name="Howard P.J."/>
            <person name="Howden P.J."/>
            <person name="Huckle E."/>
            <person name="Johnson C."/>
            <person name="Johnson D."/>
            <person name="Joy A.A."/>
            <person name="Kay M."/>
            <person name="Keenan S."/>
            <person name="Kershaw J.K."/>
            <person name="Kimberley A.M."/>
            <person name="King A."/>
            <person name="Knights A."/>
            <person name="Laird G.K."/>
            <person name="Langford C."/>
            <person name="Lawlor S."/>
            <person name="Leongamornlert D.A."/>
            <person name="Leversha M."/>
            <person name="Lloyd C."/>
            <person name="Lloyd D.M."/>
            <person name="Lovell J."/>
            <person name="Martin S."/>
            <person name="Mashreghi-Mohammadi M."/>
            <person name="Matthews L."/>
            <person name="McLaren S."/>
            <person name="McLay K.E."/>
            <person name="McMurray A."/>
            <person name="Milne S."/>
            <person name="Nickerson T."/>
            <person name="Nisbett J."/>
            <person name="Nordsiek G."/>
            <person name="Pearce A.V."/>
            <person name="Peck A.I."/>
            <person name="Porter K.M."/>
            <person name="Pandian R."/>
            <person name="Pelan S."/>
            <person name="Phillimore B."/>
            <person name="Povey S."/>
            <person name="Ramsey Y."/>
            <person name="Rand V."/>
            <person name="Scharfe M."/>
            <person name="Sehra H.K."/>
            <person name="Shownkeen R."/>
            <person name="Sims S.K."/>
            <person name="Skuce C.D."/>
            <person name="Smith M."/>
            <person name="Steward C.A."/>
            <person name="Swarbreck D."/>
            <person name="Sycamore N."/>
            <person name="Tester J."/>
            <person name="Thorpe A."/>
            <person name="Tracey A."/>
            <person name="Tromans A."/>
            <person name="Thomas D.W."/>
            <person name="Wall M."/>
            <person name="Wallis J.M."/>
            <person name="West A.P."/>
            <person name="Whitehead S.L."/>
            <person name="Willey D.L."/>
            <person name="Williams S.A."/>
            <person name="Wilming L."/>
            <person name="Wray P.W."/>
            <person name="Young L."/>
            <person name="Ashurst J.L."/>
            <person name="Coulson A."/>
            <person name="Blocker H."/>
            <person name="Durbin R.M."/>
            <person name="Sulston J.E."/>
            <person name="Hubbard T."/>
            <person name="Jackson M.J."/>
            <person name="Bentley D.R."/>
            <person name="Beck S."/>
            <person name="Rogers J."/>
            <person name="Dunham I."/>
        </authorList>
    </citation>
    <scope>NUCLEOTIDE SEQUENCE [LARGE SCALE GENOMIC DNA]</scope>
</reference>
<reference key="4">
    <citation type="submission" date="2005-07" db="EMBL/GenBank/DDBJ databases">
        <authorList>
            <person name="Mural R.J."/>
            <person name="Istrail S."/>
            <person name="Sutton G.G."/>
            <person name="Florea L."/>
            <person name="Halpern A.L."/>
            <person name="Mobarry C.M."/>
            <person name="Lippert R."/>
            <person name="Walenz B."/>
            <person name="Shatkay H."/>
            <person name="Dew I."/>
            <person name="Miller J.R."/>
            <person name="Flanigan M.J."/>
            <person name="Edwards N.J."/>
            <person name="Bolanos R."/>
            <person name="Fasulo D."/>
            <person name="Halldorsson B.V."/>
            <person name="Hannenhalli S."/>
            <person name="Turner R."/>
            <person name="Yooseph S."/>
            <person name="Lu F."/>
            <person name="Nusskern D.R."/>
            <person name="Shue B.C."/>
            <person name="Zheng X.H."/>
            <person name="Zhong F."/>
            <person name="Delcher A.L."/>
            <person name="Huson D.H."/>
            <person name="Kravitz S.A."/>
            <person name="Mouchard L."/>
            <person name="Reinert K."/>
            <person name="Remington K.A."/>
            <person name="Clark A.G."/>
            <person name="Waterman M.S."/>
            <person name="Eichler E.E."/>
            <person name="Adams M.D."/>
            <person name="Hunkapiller M.W."/>
            <person name="Myers E.W."/>
            <person name="Venter J.C."/>
        </authorList>
    </citation>
    <scope>NUCLEOTIDE SEQUENCE [LARGE SCALE GENOMIC DNA]</scope>
</reference>
<reference key="5">
    <citation type="journal article" date="2004" name="Genome Res.">
        <title>The status, quality, and expansion of the NIH full-length cDNA project: the Mammalian Gene Collection (MGC).</title>
        <authorList>
            <consortium name="The MGC Project Team"/>
        </authorList>
    </citation>
    <scope>NUCLEOTIDE SEQUENCE [LARGE SCALE MRNA]</scope>
    <source>
        <tissue>Ovary</tissue>
    </source>
</reference>
<reference key="6">
    <citation type="journal article" date="1999" name="Hum. Mol. Genet.">
        <title>Extensive gene order differences within regions of conserved synteny between the Fugu and human genomes: implications for chromosomal evolution and the cloning of disease genes.</title>
        <authorList>
            <person name="Gilley J."/>
            <person name="Fried M."/>
        </authorList>
    </citation>
    <scope>NUCLEOTIDE SEQUENCE [GENOMIC DNA] OF 581-803 AND 839-914</scope>
</reference>
<reference key="7">
    <citation type="journal article" date="2003" name="J. Clin. Invest.">
        <title>Deubiquitination of type 2 iodothyronine deiodinase by von Hippel-Lindau protein-interacting deubiquitinating enzymes regulates thyroid hormone activation.</title>
        <authorList>
            <person name="Curcio-Morelli C."/>
            <person name="Zavacki A.M."/>
            <person name="Christofollete M."/>
            <person name="Gereben B."/>
            <person name="de Freitas B.C."/>
            <person name="Harney J.W."/>
            <person name="Li Z."/>
            <person name="Wu G."/>
            <person name="Bianco A.C."/>
        </authorList>
    </citation>
    <scope>FUNCTION</scope>
    <scope>INTERACTION WITH DIO2</scope>
    <scope>SUBCELLULAR LOCATION</scope>
</reference>
<reference key="8">
    <citation type="journal article" date="2005" name="EMBO Rep.">
        <title>VHL protein-interacting deubiquitinating enzyme 2 deubiquitinates and stabilizes HIF-1alpha.</title>
        <authorList>
            <person name="Li Z."/>
            <person name="Wang D."/>
            <person name="Messing E.M."/>
            <person name="Wu G."/>
        </authorList>
    </citation>
    <scope>FUNCTION</scope>
    <scope>INTERACTION WITH HIF1A</scope>
</reference>
<reference key="9">
    <citation type="journal article" date="2006" name="Cell">
        <title>Global, in vivo, and site-specific phosphorylation dynamics in signaling networks.</title>
        <authorList>
            <person name="Olsen J.V."/>
            <person name="Blagoev B."/>
            <person name="Gnad F."/>
            <person name="Macek B."/>
            <person name="Kumar C."/>
            <person name="Mortensen P."/>
            <person name="Mann M."/>
        </authorList>
    </citation>
    <scope>PHOSPHORYLATION [LARGE SCALE ANALYSIS] AT THR-258</scope>
    <scope>IDENTIFICATION BY MASS SPECTROMETRY [LARGE SCALE ANALYSIS]</scope>
    <source>
        <tissue>Cervix carcinoma</tissue>
    </source>
</reference>
<reference key="10">
    <citation type="journal article" date="2008" name="Mol. Cell">
        <title>Kinase-selective enrichment enables quantitative phosphoproteomics of the kinome across the cell cycle.</title>
        <authorList>
            <person name="Daub H."/>
            <person name="Olsen J.V."/>
            <person name="Bairlein M."/>
            <person name="Gnad F."/>
            <person name="Oppermann F.S."/>
            <person name="Korner R."/>
            <person name="Greff Z."/>
            <person name="Keri G."/>
            <person name="Stemmann O."/>
            <person name="Mann M."/>
        </authorList>
    </citation>
    <scope>PHOSPHORYLATION [LARGE SCALE ANALYSIS] AT SER-132 AND SER-134</scope>
    <scope>IDENTIFICATION BY MASS SPECTROMETRY [LARGE SCALE ANALYSIS]</scope>
    <source>
        <tissue>Cervix carcinoma</tissue>
    </source>
</reference>
<reference key="11">
    <citation type="journal article" date="2008" name="Proc. Natl. Acad. Sci. U.S.A.">
        <title>A quantitative atlas of mitotic phosphorylation.</title>
        <authorList>
            <person name="Dephoure N."/>
            <person name="Zhou C."/>
            <person name="Villen J."/>
            <person name="Beausoleil S.A."/>
            <person name="Bakalarski C.E."/>
            <person name="Elledge S.J."/>
            <person name="Gygi S.P."/>
        </authorList>
    </citation>
    <scope>PHOSPHORYLATION [LARGE SCALE ANALYSIS] AT THR-377 AND SER-413</scope>
    <scope>IDENTIFICATION BY MASS SPECTROMETRY [LARGE SCALE ANALYSIS]</scope>
    <source>
        <tissue>Cervix carcinoma</tissue>
    </source>
</reference>
<reference key="12">
    <citation type="journal article" date="2009" name="EMBO J.">
        <title>The deubiquitinases USP33 and USP20 coordinate beta2 adrenergic receptor recycling and resensitization.</title>
        <authorList>
            <person name="Berthouze M."/>
            <person name="Venkataramanan V."/>
            <person name="Li Y."/>
            <person name="Shenoy S.K."/>
        </authorList>
    </citation>
    <scope>FUNCTION</scope>
    <scope>INTERACTION WITH ADRB2</scope>
    <scope>MUTAGENESIS OF CYS-154 AND HIS-643</scope>
</reference>
<reference key="13">
    <citation type="journal article" date="2011" name="Sci. Signal.">
        <title>System-wide temporal characterization of the proteome and phosphoproteome of human embryonic stem cell differentiation.</title>
        <authorList>
            <person name="Rigbolt K.T."/>
            <person name="Prokhorova T.A."/>
            <person name="Akimov V."/>
            <person name="Henningsen J."/>
            <person name="Johansen P.T."/>
            <person name="Kratchmarova I."/>
            <person name="Kassem M."/>
            <person name="Mann M."/>
            <person name="Olsen J.V."/>
            <person name="Blagoev B."/>
        </authorList>
    </citation>
    <scope>PHOSPHORYLATION [LARGE SCALE ANALYSIS] AT SER-132 AND SER-134</scope>
    <scope>IDENTIFICATION BY MASS SPECTROMETRY [LARGE SCALE ANALYSIS]</scope>
</reference>
<reference key="14">
    <citation type="journal article" date="2012" name="J. Cell Biol.">
        <title>MARCH2 promotes endocytosis and lysosomal sorting of carvedilol-bound beta(2)-adrenergic receptors.</title>
        <authorList>
            <person name="Han S.O."/>
            <person name="Xiao K."/>
            <person name="Kim J."/>
            <person name="Wu J.H."/>
            <person name="Wisler J.W."/>
            <person name="Nakamura N."/>
            <person name="Freedman N.J."/>
            <person name="Shenoy S.K."/>
        </authorList>
    </citation>
    <scope>INTERACTION WITH ADRB2</scope>
</reference>
<reference key="15">
    <citation type="journal article" date="2013" name="J. Proteome Res.">
        <title>Toward a comprehensive characterization of a human cancer cell phosphoproteome.</title>
        <authorList>
            <person name="Zhou H."/>
            <person name="Di Palma S."/>
            <person name="Preisinger C."/>
            <person name="Peng M."/>
            <person name="Polat A.N."/>
            <person name="Heck A.J."/>
            <person name="Mohammed S."/>
        </authorList>
    </citation>
    <scope>PHOSPHORYLATION [LARGE SCALE ANALYSIS] AT SER-112; SER-132; SER-134; SER-305; THR-377; SER-408 AND SER-413</scope>
    <scope>IDENTIFICATION BY MASS SPECTROMETRY [LARGE SCALE ANALYSIS]</scope>
    <source>
        <tissue>Cervix carcinoma</tissue>
        <tissue>Erythroleukemia</tissue>
    </source>
</reference>
<reference key="16">
    <citation type="journal article" date="2013" name="Nature">
        <title>USP33 regulates centrosome biogenesis via deubiquitination of the centriolar protein CP110.</title>
        <authorList>
            <person name="Li J."/>
            <person name="D'Angiolella V."/>
            <person name="Seeley E.S."/>
            <person name="Kim S."/>
            <person name="Kobayashi T."/>
            <person name="Fu W."/>
            <person name="Campos E.I."/>
            <person name="Pagano M."/>
            <person name="Dynlacht B.D."/>
        </authorList>
    </citation>
    <scope>SUBCELLULAR LOCATION</scope>
    <scope>INTERACTION WITH CCP110</scope>
</reference>
<reference key="17">
    <citation type="journal article" date="2014" name="J. Proteomics">
        <title>An enzyme assisted RP-RPLC approach for in-depth analysis of human liver phosphoproteome.</title>
        <authorList>
            <person name="Bian Y."/>
            <person name="Song C."/>
            <person name="Cheng K."/>
            <person name="Dong M."/>
            <person name="Wang F."/>
            <person name="Huang J."/>
            <person name="Sun D."/>
            <person name="Wang L."/>
            <person name="Ye M."/>
            <person name="Zou H."/>
        </authorList>
    </citation>
    <scope>PHOSPHORYLATION [LARGE SCALE ANALYSIS] AT SER-132 AND SER-134</scope>
    <scope>IDENTIFICATION BY MASS SPECTROMETRY [LARGE SCALE ANALYSIS]</scope>
    <source>
        <tissue>Liver</tissue>
    </source>
</reference>
<reference key="18">
    <citation type="journal article" date="2016" name="J. Biol. Chem.">
        <title>Ubiquitin-specific Protease 20 Regulates the Reciprocal Functions of beta-Arrestin2 in Toll-like Receptor 4-promoted Nuclear Factor kappaB (NFkappaB) Activation.</title>
        <authorList>
            <person name="Jean-Charles P.Y."/>
            <person name="Zhang L."/>
            <person name="Wu J.H."/>
            <person name="Han S.O."/>
            <person name="Brian L."/>
            <person name="Freedman N.J."/>
            <person name="Shenoy S.K."/>
        </authorList>
    </citation>
    <scope>FUNCTION</scope>
    <scope>CATALYTIC ACTIVITY</scope>
</reference>
<reference key="19">
    <citation type="journal article" date="2016" name="Cell Res.">
        <title>USP18 recruits USP20 to promote innate antiviral response through deubiquitinating STING/MITA.</title>
        <authorList>
            <person name="Zhang M."/>
            <person name="Zhang M.X."/>
            <person name="Zhang Q."/>
            <person name="Zhu G.F."/>
            <person name="Yuan L."/>
            <person name="Zhang D.E."/>
            <person name="Zhu Q."/>
            <person name="Yao J."/>
            <person name="Shu H.B."/>
            <person name="Zhong B."/>
        </authorList>
    </citation>
    <scope>FUNCTION</scope>
    <scope>CATALYTIC ACTIVITY</scope>
    <scope>INTERACTION WITH USP18</scope>
</reference>
<reference key="20">
    <citation type="journal article" date="2018" name="EMBO Rep.">
        <title>The deubiquitinating enzyme USP20 stabilizes ULK1 and promotes autophagy initiation.</title>
        <authorList>
            <person name="Kim J.H."/>
            <person name="Seo D."/>
            <person name="Kim S.J."/>
            <person name="Choi D.W."/>
            <person name="Park J.S."/>
            <person name="Ha J."/>
            <person name="Choi J."/>
            <person name="Lee J.H."/>
            <person name="Jung S.M."/>
            <person name="Seo K.W."/>
            <person name="Lee E.W."/>
            <person name="Lee Y.S."/>
            <person name="Cheong H."/>
            <person name="Choi C.Y."/>
            <person name="Park S.H."/>
        </authorList>
    </citation>
    <scope>FUNCTION</scope>
    <scope>CATALYTIC ACTIVITY</scope>
    <scope>MUTAGENESIS OF CYS-154 AND HIS-643</scope>
</reference>
<reference key="21">
    <citation type="journal article" date="2020" name="Int. J. Mol. Sci.">
        <title>The Deubiquitinating Enzyme USP20 Regulates the TNFalpha-Induced NF-kappaB Signaling Pathway through Stabilization of p62.</title>
        <authorList>
            <person name="Ha J."/>
            <person name="Kim M."/>
            <person name="Seo D."/>
            <person name="Park J.S."/>
            <person name="Lee J."/>
            <person name="Lee J."/>
            <person name="Park S.H."/>
        </authorList>
    </citation>
    <scope>FUNCTION</scope>
    <scope>CATALYTIC ACTIVITY</scope>
</reference>
<reference key="22">
    <citation type="journal article" date="2021" name="J. Cell Biol.">
        <title>Deubiquitinases USP20/33 promote the biogenesis of tail-anchored membrane proteins.</title>
        <authorList>
            <person name="Culver J.A."/>
            <person name="Mariappan M."/>
        </authorList>
    </citation>
    <scope>FUNCTION</scope>
    <scope>SUBCELLULAR LOCATION</scope>
</reference>
<reference key="23">
    <citation type="journal article" date="2022" name="Biochem. Biophys. Res. Commun.">
        <title>The deubiquitinating enzyme USP20 regulates the stability of the MCL1 protein.</title>
        <authorList>
            <person name="Feng J."/>
            <person name="Liu P."/>
            <person name="Li X."/>
            <person name="Zhang D."/>
            <person name="Lin H."/>
            <person name="Hou Z."/>
            <person name="Guo C."/>
            <person name="Niu Y."/>
            <person name="Dai B."/>
            <person name="Wang O."/>
            <person name="Qi M."/>
            <person name="Wang H."/>
            <person name="Zhou H."/>
        </authorList>
    </citation>
    <scope>FUNCTION</scope>
    <scope>CATALYTIC ACTIVITY</scope>
    <scope>MUTAGENESIS OF CYS-154</scope>
</reference>
<comment type="function">
    <text evidence="8 9 10 11 14 15 16 17 18 19">Deubiquitinating enzyme that plays a role in many cellular processes including autophagy, cellular antiviral response or membrane protein biogenesis (PubMed:27801882, PubMed:29487085). Attenuates TLR4-mediated NF-kappa-B signaling by cooperating with beta-arrestin-2/ARRB2 and inhibiting TRAF6 autoubiquitination (PubMed:26839314). Promotes cellular antiviral responses by deconjugating 'Lys-33' and 'Lys-48'-linked ubiquitination of STING1 leading to its stabilization (PubMed:27801882). Plays an essential role in autophagy induction by regulating the ULK1 stability through deubiquitination of ULK1 (PubMed:29487085). Acts as a positive regulator for NF-kappa-B activation by TNF-alpha through deubiquitinating 'Lys-48'-linked polyubiquitination of SQSTM1, leading to its increased stability (PubMed:32354117). Acts as a regulator of G-protein coupled receptor (GPCR) signaling by mediating the deubiquitination beta-2 adrenergic receptor (ADRB2) (PubMed:19424180). Plays a central role in ADRB2 recycling and resensitization after prolonged agonist stimulation by constitutively binding ADRB2, mediating deubiquitination of ADRB2 and inhibiting lysosomal trafficking of ADRB2. Upon dissociation, it is probably transferred to the translocated beta-arrestins, possibly leading to beta-arrestins deubiquitination and disengagement from ADRB2 (PubMed:19424180). This suggests the existence of a dynamic exchange between the ADRB2 and beta-arrestins. Deubiquitinates DIO2, thereby regulating thyroid hormone regulation. Deubiquitinates HIF1A, leading to stabilize HIF1A and enhance HIF1A-mediated activity (PubMed:15776016). Deubiquitinates MCL1, a pivotal member of the anti-apoptotic Bcl-2 protein family to regulate its stability (PubMed:35063767). Within the endoplasmic reticulum, participates with USP33 in the rescue of post-translationally targeted membrane proteins that are inappropriately ubiquitinated by the cytosolic protein quality control in the cytosol (PubMed:33792613).</text>
</comment>
<comment type="catalytic activity">
    <reaction evidence="14 15 16 17 19">
        <text>Thiol-dependent hydrolysis of ester, thioester, amide, peptide and isopeptide bonds formed by the C-terminal Gly of ubiquitin (a 76-residue protein attached to proteins as an intracellular targeting signal).</text>
        <dbReference type="EC" id="3.4.19.12"/>
    </reaction>
</comment>
<comment type="subunit">
    <text evidence="8 9 10 11 12 13 15">Interacts with VHL, leading to its ubiquitination and subsequent degradation (PubMed:12056827). Interacts with CCP110 (PubMed:23486064). Interacts with DIO2 (PubMed:12865408). Interacts with HIF1A (PubMed:15776016). Interacts with ADRB2 (PubMed:19424180, PubMed:23166351). Interacts with USP18 (PubMed:27801882).</text>
</comment>
<comment type="interaction">
    <interactant intactId="EBI-2511991">
        <id>Q9Y2K6</id>
    </interactant>
    <interactant intactId="EBI-712648">
        <id>O95994</id>
        <label>AGR2</label>
    </interactant>
    <organismsDiffer>false</organismsDiffer>
    <experiments>3</experiments>
</comment>
<comment type="interaction">
    <interactant intactId="EBI-2511991">
        <id>Q9Y2K6</id>
    </interactant>
    <interactant intactId="EBI-3905054">
        <id>P13196</id>
        <label>ALAS1</label>
    </interactant>
    <organismsDiffer>false</organismsDiffer>
    <experiments>3</experiments>
</comment>
<comment type="interaction">
    <interactant intactId="EBI-2511991">
        <id>Q9Y2K6</id>
    </interactant>
    <interactant intactId="EBI-12218351">
        <id>Q99767-2</id>
        <label>APBA2</label>
    </interactant>
    <organismsDiffer>false</organismsDiffer>
    <experiments>3</experiments>
</comment>
<comment type="interaction">
    <interactant intactId="EBI-2511991">
        <id>Q9Y2K6</id>
    </interactant>
    <interactant intactId="EBI-948603">
        <id>Q03989</id>
        <label>ARID5A</label>
    </interactant>
    <organismsDiffer>false</organismsDiffer>
    <experiments>3</experiments>
</comment>
<comment type="interaction">
    <interactant intactId="EBI-2511991">
        <id>Q9Y2K6</id>
    </interactant>
    <interactant intactId="EBI-957042">
        <id>P50553</id>
        <label>ASCL1</label>
    </interactant>
    <organismsDiffer>false</organismsDiffer>
    <experiments>3</experiments>
</comment>
<comment type="interaction">
    <interactant intactId="EBI-2511991">
        <id>Q9Y2K6</id>
    </interactant>
    <interactant intactId="EBI-348290">
        <id>O95670</id>
        <label>ATP6V1G2</label>
    </interactant>
    <organismsDiffer>false</organismsDiffer>
    <experiments>3</experiments>
</comment>
<comment type="interaction">
    <interactant intactId="EBI-2511991">
        <id>Q9Y2K6</id>
    </interactant>
    <interactant intactId="EBI-724373">
        <id>Q7L4P6</id>
        <label>BEND5</label>
    </interactant>
    <organismsDiffer>false</organismsDiffer>
    <experiments>3</experiments>
</comment>
<comment type="interaction">
    <interactant intactId="EBI-2511991">
        <id>Q9Y2K6</id>
    </interactant>
    <interactant intactId="EBI-10181188">
        <id>Q8N7W2-2</id>
        <label>BEND7</label>
    </interactant>
    <organismsDiffer>false</organismsDiffer>
    <experiments>8</experiments>
</comment>
<comment type="interaction">
    <interactant intactId="EBI-2511991">
        <id>Q9Y2K6</id>
    </interactant>
    <interactant intactId="EBI-12065306">
        <id>P55201-2</id>
        <label>BRPF1</label>
    </interactant>
    <organismsDiffer>false</organismsDiffer>
    <experiments>3</experiments>
</comment>
<comment type="interaction">
    <interactant intactId="EBI-2511991">
        <id>Q9Y2K6</id>
    </interactant>
    <interactant intactId="EBI-2817707">
        <id>Q9BXJ5</id>
        <label>C1QTNF2</label>
    </interactant>
    <organismsDiffer>false</organismsDiffer>
    <experiments>3</experiments>
</comment>
<comment type="interaction">
    <interactant intactId="EBI-2511991">
        <id>Q9Y2K6</id>
    </interactant>
    <interactant intactId="EBI-12024864">
        <id>Q96S94-5</id>
        <label>CCNL2</label>
    </interactant>
    <organismsDiffer>false</organismsDiffer>
    <experiments>3</experiments>
</comment>
<comment type="interaction">
    <interactant intactId="EBI-2511991">
        <id>Q9Y2K6</id>
    </interactant>
    <interactant intactId="EBI-1052532">
        <id>O14519</id>
        <label>CDK2AP1</label>
    </interactant>
    <organismsDiffer>false</organismsDiffer>
    <experiments>3</experiments>
</comment>
<comment type="interaction">
    <interactant intactId="EBI-2511991">
        <id>Q9Y2K6</id>
    </interactant>
    <interactant intactId="EBI-1188472">
        <id>P78358</id>
        <label>CTAG1B</label>
    </interactant>
    <organismsDiffer>false</organismsDiffer>
    <experiments>3</experiments>
</comment>
<comment type="interaction">
    <interactant intactId="EBI-2511991">
        <id>Q9Y2K6</id>
    </interactant>
    <interactant intactId="EBI-744099">
        <id>Q9H0I2</id>
        <label>ENKD1</label>
    </interactant>
    <organismsDiffer>false</organismsDiffer>
    <experiments>3</experiments>
</comment>
<comment type="interaction">
    <interactant intactId="EBI-2511991">
        <id>Q9Y2K6</id>
    </interactant>
    <interactant intactId="EBI-447470">
        <id>Q99814</id>
        <label>EPAS1</label>
    </interactant>
    <organismsDiffer>false</organismsDiffer>
    <experiments>3</experiments>
</comment>
<comment type="interaction">
    <interactant intactId="EBI-2511991">
        <id>Q9Y2K6</id>
    </interactant>
    <interactant intactId="EBI-743099">
        <id>Q969F0</id>
        <label>FATE1</label>
    </interactant>
    <organismsDiffer>false</organismsDiffer>
    <experiments>6</experiments>
</comment>
<comment type="interaction">
    <interactant intactId="EBI-2511991">
        <id>Q9Y2K6</id>
    </interactant>
    <interactant intactId="EBI-18138793">
        <id>Q9C0B1-2</id>
        <label>FTO</label>
    </interactant>
    <organismsDiffer>false</organismsDiffer>
    <experiments>3</experiments>
</comment>
<comment type="interaction">
    <interactant intactId="EBI-2511991">
        <id>Q9Y2K6</id>
    </interactant>
    <interactant intactId="EBI-473189">
        <id>Q96D09</id>
        <label>GPRASP2</label>
    </interactant>
    <organismsDiffer>false</organismsDiffer>
    <experiments>3</experiments>
</comment>
<comment type="interaction">
    <interactant intactId="EBI-2511991">
        <id>Q9Y2K6</id>
    </interactant>
    <interactant intactId="EBI-11519926">
        <id>Q6PI77</id>
        <label>GPRASP3</label>
    </interactant>
    <organismsDiffer>false</organismsDiffer>
    <experiments>3</experiments>
</comment>
<comment type="interaction">
    <interactant intactId="EBI-2511991">
        <id>Q9Y2K6</id>
    </interactant>
    <interactant intactId="EBI-13086076">
        <id>P61296-2</id>
        <label>HAND2</label>
    </interactant>
    <organismsDiffer>false</organismsDiffer>
    <experiments>3</experiments>
</comment>
<comment type="interaction">
    <interactant intactId="EBI-2511991">
        <id>Q9Y2K6</id>
    </interactant>
    <interactant intactId="EBI-7116203">
        <id>O75031</id>
        <label>HSF2BP</label>
    </interactant>
    <organismsDiffer>false</organismsDiffer>
    <experiments>3</experiments>
</comment>
<comment type="interaction">
    <interactant intactId="EBI-2511991">
        <id>Q9Y2K6</id>
    </interactant>
    <interactant intactId="EBI-8638439">
        <id>Q8IYA8</id>
        <label>IHO1</label>
    </interactant>
    <organismsDiffer>false</organismsDiffer>
    <experiments>6</experiments>
</comment>
<comment type="interaction">
    <interactant intactId="EBI-2511991">
        <id>Q9Y2K6</id>
    </interactant>
    <interactant intactId="EBI-9658404">
        <id>Q5VVH5</id>
        <label>IRAK1BP1</label>
    </interactant>
    <organismsDiffer>false</organismsDiffer>
    <experiments>3</experiments>
</comment>
<comment type="interaction">
    <interactant intactId="EBI-2511991">
        <id>Q9Y2K6</id>
    </interactant>
    <interactant intactId="EBI-712105">
        <id>Q13352</id>
        <label>ITGB3BP</label>
    </interactant>
    <organismsDiffer>false</organismsDiffer>
    <experiments>3</experiments>
</comment>
<comment type="interaction">
    <interactant intactId="EBI-2511991">
        <id>Q9Y2K6</id>
    </interactant>
    <interactant intactId="EBI-10693436">
        <id>Q9BS75</id>
        <label>KLHL20</label>
    </interactant>
    <organismsDiffer>false</organismsDiffer>
    <experiments>3</experiments>
</comment>
<comment type="interaction">
    <interactant intactId="EBI-2511991">
        <id>Q9Y2K6</id>
    </interactant>
    <interactant intactId="EBI-10178634">
        <id>P43364-2</id>
        <label>MAGEA11</label>
    </interactant>
    <organismsDiffer>false</organismsDiffer>
    <experiments>3</experiments>
</comment>
<comment type="interaction">
    <interactant intactId="EBI-2511991">
        <id>Q9Y2K6</id>
    </interactant>
    <interactant intactId="EBI-12516603">
        <id>Q8WWY6</id>
        <label>MBD3L1</label>
    </interactant>
    <organismsDiffer>false</organismsDiffer>
    <experiments>3</experiments>
</comment>
<comment type="interaction">
    <interactant intactId="EBI-2511991">
        <id>Q9Y2K6</id>
    </interactant>
    <interactant intactId="EBI-11987923">
        <id>P59942</id>
        <label>MCCD1</label>
    </interactant>
    <organismsDiffer>false</organismsDiffer>
    <experiments>3</experiments>
</comment>
<comment type="interaction">
    <interactant intactId="EBI-2511991">
        <id>Q9Y2K6</id>
    </interactant>
    <interactant intactId="EBI-724076">
        <id>Q99750</id>
        <label>MDFI</label>
    </interactant>
    <organismsDiffer>false</organismsDiffer>
    <experiments>6</experiments>
</comment>
<comment type="interaction">
    <interactant intactId="EBI-2511991">
        <id>Q9Y2K6</id>
    </interactant>
    <interactant intactId="EBI-16439278">
        <id>Q6FHY5</id>
        <label>MEOX2</label>
    </interactant>
    <organismsDiffer>false</organismsDiffer>
    <experiments>3</experiments>
</comment>
<comment type="interaction">
    <interactant intactId="EBI-2511991">
        <id>Q9Y2K6</id>
    </interactant>
    <interactant intactId="EBI-723426">
        <id>Q13084</id>
        <label>MRPL28</label>
    </interactant>
    <organismsDiffer>false</organismsDiffer>
    <experiments>3</experiments>
</comment>
<comment type="interaction">
    <interactant intactId="EBI-2511991">
        <id>Q9Y2K6</id>
    </interactant>
    <interactant intactId="EBI-10302990">
        <id>Q9BYU1</id>
        <label>PBX4</label>
    </interactant>
    <organismsDiffer>false</organismsDiffer>
    <experiments>3</experiments>
</comment>
<comment type="interaction">
    <interactant intactId="EBI-2511991">
        <id>Q9Y2K6</id>
    </interactant>
    <interactant intactId="EBI-12821217">
        <id>Q2I0M5</id>
        <label>RSPO4</label>
    </interactant>
    <organismsDiffer>false</organismsDiffer>
    <experiments>3</experiments>
</comment>
<comment type="interaction">
    <interactant intactId="EBI-2511991">
        <id>Q9Y2K6</id>
    </interactant>
    <interactant intactId="EBI-12965130">
        <id>Q8N8I0</id>
        <label>SAMD12</label>
    </interactant>
    <organismsDiffer>false</organismsDiffer>
    <experiments>3</experiments>
</comment>
<comment type="interaction">
    <interactant intactId="EBI-2511991">
        <id>Q9Y2K6</id>
    </interactant>
    <interactant intactId="EBI-742487">
        <id>O43597</id>
        <label>SPRY2</label>
    </interactant>
    <organismsDiffer>false</organismsDiffer>
    <experiments>3</experiments>
</comment>
<comment type="interaction">
    <interactant intactId="EBI-2511991">
        <id>Q9Y2K6</id>
    </interactant>
    <interactant intactId="EBI-17766455">
        <id>A0A286YEY3</id>
        <label>SRGAP2B</label>
    </interactant>
    <organismsDiffer>false</organismsDiffer>
    <experiments>3</experiments>
</comment>
<comment type="interaction">
    <interactant intactId="EBI-2511991">
        <id>Q9Y2K6</id>
    </interactant>
    <interactant intactId="EBI-746692">
        <id>P19237</id>
        <label>TNNI1</label>
    </interactant>
    <organismsDiffer>false</organismsDiffer>
    <experiments>3</experiments>
</comment>
<comment type="interaction">
    <interactant intactId="EBI-2511991">
        <id>Q9Y2K6</id>
    </interactant>
    <interactant intactId="EBI-492476">
        <id>Q96RU7</id>
        <label>TRIB3</label>
    </interactant>
    <organismsDiffer>false</organismsDiffer>
    <experiments>3</experiments>
</comment>
<comment type="interaction">
    <interactant intactId="EBI-2511991">
        <id>Q9Y2K6</id>
    </interactant>
    <interactant intactId="EBI-740098">
        <id>P36406</id>
        <label>TRIM23</label>
    </interactant>
    <organismsDiffer>false</organismsDiffer>
    <experiments>3</experiments>
</comment>
<comment type="interaction">
    <interactant intactId="EBI-2511991">
        <id>Q9Y2K6</id>
    </interactant>
    <interactant intactId="EBI-948354">
        <id>Q6DKK2</id>
        <label>TTC19</label>
    </interactant>
    <organismsDiffer>false</organismsDiffer>
    <experiments>3</experiments>
</comment>
<comment type="interaction">
    <interactant intactId="EBI-2511991">
        <id>Q9Y2K6</id>
    </interactant>
    <interactant intactId="EBI-8656864">
        <id>Q6PF05</id>
        <label>TTC23L</label>
    </interactant>
    <organismsDiffer>false</organismsDiffer>
    <experiments>3</experiments>
</comment>
<comment type="interaction">
    <interactant intactId="EBI-2511991">
        <id>Q9Y2K6</id>
    </interactant>
    <interactant intactId="EBI-1059156">
        <id>Q9P0L0</id>
        <label>VAPA</label>
    </interactant>
    <organismsDiffer>false</organismsDiffer>
    <experiments>6</experiments>
</comment>
<comment type="interaction">
    <interactant intactId="EBI-2511991">
        <id>Q9Y2K6</id>
    </interactant>
    <interactant intactId="EBI-1188298">
        <id>O95292</id>
        <label>VAPB</label>
    </interactant>
    <organismsDiffer>false</organismsDiffer>
    <experiments>9</experiments>
</comment>
<comment type="interaction">
    <interactant intactId="EBI-2511991">
        <id>Q9Y2K6</id>
    </interactant>
    <interactant intactId="EBI-10178947">
        <id>Q53XM7</id>
        <label>VAPB</label>
    </interactant>
    <organismsDiffer>false</organismsDiffer>
    <experiments>3</experiments>
</comment>
<comment type="interaction">
    <interactant intactId="EBI-2511991">
        <id>Q9Y2K6</id>
    </interactant>
    <interactant intactId="EBI-12227803">
        <id>Q5SQQ9-2</id>
        <label>VAX1</label>
    </interactant>
    <organismsDiffer>false</organismsDiffer>
    <experiments>3</experiments>
</comment>
<comment type="interaction">
    <interactant intactId="EBI-2511991">
        <id>Q9Y2K6</id>
    </interactant>
    <interactant intactId="EBI-12017160">
        <id>Q96DT7-3</id>
        <label>ZBTB10</label>
    </interactant>
    <organismsDiffer>false</organismsDiffer>
    <experiments>3</experiments>
</comment>
<comment type="interaction">
    <interactant intactId="EBI-2511991">
        <id>Q9Y2K6</id>
    </interactant>
    <interactant intactId="EBI-8656416">
        <id>Q68DK2-5</id>
        <label>ZFYVE26</label>
    </interactant>
    <organismsDiffer>false</organismsDiffer>
    <experiments>3</experiments>
</comment>
<comment type="interaction">
    <interactant intactId="EBI-2511991">
        <id>Q9Y2K6</id>
    </interactant>
    <interactant intactId="EBI-10252492">
        <id>Q6P1L6</id>
        <label>ZNF343</label>
    </interactant>
    <organismsDiffer>false</organismsDiffer>
    <experiments>3</experiments>
</comment>
<comment type="interaction">
    <interactant intactId="EBI-2511991">
        <id>Q9Y2K6</id>
    </interactant>
    <interactant intactId="EBI-347633">
        <id>Q9H9D4</id>
        <label>ZNF408</label>
    </interactant>
    <organismsDiffer>false</organismsDiffer>
    <experiments>3</experiments>
</comment>
<comment type="interaction">
    <interactant intactId="EBI-2511991">
        <id>Q9Y2K6</id>
    </interactant>
    <interactant intactId="EBI-4395669">
        <id>Q6ZNG0</id>
        <label>ZNF620</label>
    </interactant>
    <organismsDiffer>false</organismsDiffer>
    <experiments>3</experiments>
</comment>
<comment type="interaction">
    <interactant intactId="EBI-2511991">
        <id>Q9Y2K6</id>
    </interactant>
    <interactant intactId="EBI-17493569">
        <id>P98169</id>
        <label>ZXDB</label>
    </interactant>
    <organismsDiffer>false</organismsDiffer>
    <experiments>3</experiments>
</comment>
<comment type="subcellular location">
    <subcellularLocation>
        <location evidence="2">Cytoplasm</location>
    </subcellularLocation>
    <subcellularLocation>
        <location evidence="9 18">Endoplasmic reticulum</location>
    </subcellularLocation>
    <subcellularLocation>
        <location evidence="1">Cytoplasm</location>
        <location evidence="1">Perinuclear region</location>
    </subcellularLocation>
    <subcellularLocation>
        <location evidence="13">Cytoplasm</location>
        <location evidence="13">Cytoskeleton</location>
        <location evidence="13">Microtubule organizing center</location>
        <location evidence="13">Centrosome</location>
    </subcellularLocation>
</comment>
<comment type="domain">
    <text evidence="1">The UBP-type zinc finger binds 3 zinc ions. However, it does not bind ubiquitin, probably because the conserved Arg in position 55 is replaced by a Glu residue (By similarity).</text>
</comment>
<comment type="PTM">
    <text evidence="8">Ubiquitinated via a VHL-dependent pathway for proteasomal degradation.</text>
</comment>
<comment type="similarity">
    <text evidence="20">Belongs to the peptidase C19 family. USP20/USP33 subfamily.</text>
</comment>
<comment type="sequence caution" evidence="20">
    <conflict type="erroneous initiation">
        <sequence resource="EMBL-CDS" id="BAA76847"/>
    </conflict>
</comment>
<gene>
    <name type="primary">USP20</name>
    <name type="synonym">KIAA1003</name>
    <name type="synonym">LSFR3A</name>
    <name type="synonym">VDU2</name>
</gene>
<dbReference type="EC" id="3.4.19.12" evidence="14 15 16 17 19"/>
<dbReference type="EMBL" id="AY074877">
    <property type="protein sequence ID" value="AAL79676.1"/>
    <property type="molecule type" value="mRNA"/>
</dbReference>
<dbReference type="EMBL" id="AB023220">
    <property type="protein sequence ID" value="BAA76847.2"/>
    <property type="status" value="ALT_INIT"/>
    <property type="molecule type" value="mRNA"/>
</dbReference>
<dbReference type="EMBL" id="AL158207">
    <property type="status" value="NOT_ANNOTATED_CDS"/>
    <property type="molecule type" value="Genomic_DNA"/>
</dbReference>
<dbReference type="EMBL" id="CH471090">
    <property type="protein sequence ID" value="EAW87914.1"/>
    <property type="molecule type" value="Genomic_DNA"/>
</dbReference>
<dbReference type="EMBL" id="BC039593">
    <property type="protein sequence ID" value="AAH39593.1"/>
    <property type="molecule type" value="mRNA"/>
</dbReference>
<dbReference type="EMBL" id="Y17457">
    <property type="protein sequence ID" value="CAB44350.1"/>
    <property type="molecule type" value="Genomic_DNA"/>
</dbReference>
<dbReference type="EMBL" id="Y17459">
    <property type="protein sequence ID" value="CAB44352.1"/>
    <property type="molecule type" value="Genomic_DNA"/>
</dbReference>
<dbReference type="CCDS" id="CCDS43892.1"/>
<dbReference type="RefSeq" id="NP_001008563.2">
    <property type="nucleotide sequence ID" value="NM_001008563.5"/>
</dbReference>
<dbReference type="RefSeq" id="NP_001103773.2">
    <property type="nucleotide sequence ID" value="NM_001110303.4"/>
</dbReference>
<dbReference type="RefSeq" id="NP_006667.3">
    <property type="nucleotide sequence ID" value="NM_006676.7"/>
</dbReference>
<dbReference type="RefSeq" id="XP_005251722.1">
    <property type="nucleotide sequence ID" value="XM_005251665.3"/>
</dbReference>
<dbReference type="RefSeq" id="XP_011516463.1">
    <property type="nucleotide sequence ID" value="XM_011518161.2"/>
</dbReference>
<dbReference type="RefSeq" id="XP_011516464.1">
    <property type="nucleotide sequence ID" value="XM_011518162.2"/>
</dbReference>
<dbReference type="PDB" id="6KCZ">
    <property type="method" value="NMR"/>
    <property type="chains" value="A=1-99"/>
</dbReference>
<dbReference type="PDBsum" id="6KCZ"/>
<dbReference type="SMR" id="Q9Y2K6"/>
<dbReference type="BioGRID" id="116077">
    <property type="interactions" value="211"/>
</dbReference>
<dbReference type="CORUM" id="Q9Y2K6"/>
<dbReference type="FunCoup" id="Q9Y2K6">
    <property type="interactions" value="1302"/>
</dbReference>
<dbReference type="IntAct" id="Q9Y2K6">
    <property type="interactions" value="98"/>
</dbReference>
<dbReference type="MINT" id="Q9Y2K6"/>
<dbReference type="STRING" id="9606.ENSP00000313811"/>
<dbReference type="BindingDB" id="Q9Y2K6"/>
<dbReference type="ChEMBL" id="CHEMBL3232682"/>
<dbReference type="MEROPS" id="C19.025"/>
<dbReference type="iPTMnet" id="Q9Y2K6"/>
<dbReference type="PhosphoSitePlus" id="Q9Y2K6"/>
<dbReference type="SwissPalm" id="Q9Y2K6"/>
<dbReference type="BioMuta" id="USP20"/>
<dbReference type="DMDM" id="116242837"/>
<dbReference type="jPOST" id="Q9Y2K6"/>
<dbReference type="MassIVE" id="Q9Y2K6"/>
<dbReference type="PaxDb" id="9606-ENSP00000313811"/>
<dbReference type="PeptideAtlas" id="Q9Y2K6"/>
<dbReference type="ProteomicsDB" id="85826"/>
<dbReference type="Pumba" id="Q9Y2K6"/>
<dbReference type="Antibodypedia" id="1730">
    <property type="antibodies" value="318 antibodies from 30 providers"/>
</dbReference>
<dbReference type="DNASU" id="10868"/>
<dbReference type="Ensembl" id="ENST00000315480.9">
    <property type="protein sequence ID" value="ENSP00000313811.4"/>
    <property type="gene ID" value="ENSG00000136878.14"/>
</dbReference>
<dbReference type="Ensembl" id="ENST00000358355.5">
    <property type="protein sequence ID" value="ENSP00000351122.1"/>
    <property type="gene ID" value="ENSG00000136878.14"/>
</dbReference>
<dbReference type="Ensembl" id="ENST00000372429.8">
    <property type="protein sequence ID" value="ENSP00000361506.3"/>
    <property type="gene ID" value="ENSG00000136878.14"/>
</dbReference>
<dbReference type="GeneID" id="10868"/>
<dbReference type="KEGG" id="hsa:10868"/>
<dbReference type="MANE-Select" id="ENST00000372429.8">
    <property type="protein sequence ID" value="ENSP00000361506.3"/>
    <property type="RefSeq nucleotide sequence ID" value="NM_001110303.4"/>
    <property type="RefSeq protein sequence ID" value="NP_001103773.2"/>
</dbReference>
<dbReference type="UCSC" id="uc004byr.4">
    <property type="organism name" value="human"/>
</dbReference>
<dbReference type="AGR" id="HGNC:12619"/>
<dbReference type="CTD" id="10868"/>
<dbReference type="DisGeNET" id="10868"/>
<dbReference type="GeneCards" id="USP20"/>
<dbReference type="HGNC" id="HGNC:12619">
    <property type="gene designation" value="USP20"/>
</dbReference>
<dbReference type="HPA" id="ENSG00000136878">
    <property type="expression patterns" value="Low tissue specificity"/>
</dbReference>
<dbReference type="MIM" id="615143">
    <property type="type" value="gene"/>
</dbReference>
<dbReference type="neXtProt" id="NX_Q9Y2K6"/>
<dbReference type="OpenTargets" id="ENSG00000136878"/>
<dbReference type="PharmGKB" id="PA37245"/>
<dbReference type="VEuPathDB" id="HostDB:ENSG00000136878"/>
<dbReference type="eggNOG" id="KOG1870">
    <property type="taxonomic scope" value="Eukaryota"/>
</dbReference>
<dbReference type="GeneTree" id="ENSGT00940000158829"/>
<dbReference type="HOGENOM" id="CLU_004896_0_0_1"/>
<dbReference type="InParanoid" id="Q9Y2K6"/>
<dbReference type="OMA" id="IDQDDEC"/>
<dbReference type="OrthoDB" id="73004at2759"/>
<dbReference type="PAN-GO" id="Q9Y2K6">
    <property type="GO annotations" value="1 GO annotation based on evolutionary models"/>
</dbReference>
<dbReference type="PhylomeDB" id="Q9Y2K6"/>
<dbReference type="TreeFam" id="TF352179"/>
<dbReference type="PathwayCommons" id="Q9Y2K6"/>
<dbReference type="Reactome" id="R-HSA-5689880">
    <property type="pathway name" value="Ub-specific processing proteases"/>
</dbReference>
<dbReference type="SignaLink" id="Q9Y2K6"/>
<dbReference type="SIGNOR" id="Q9Y2K6"/>
<dbReference type="BioGRID-ORCS" id="10868">
    <property type="hits" value="11 hits in 1195 CRISPR screens"/>
</dbReference>
<dbReference type="ChiTaRS" id="USP20">
    <property type="organism name" value="human"/>
</dbReference>
<dbReference type="GeneWiki" id="USP20"/>
<dbReference type="GenomeRNAi" id="10868"/>
<dbReference type="Pharos" id="Q9Y2K6">
    <property type="development level" value="Tbio"/>
</dbReference>
<dbReference type="PRO" id="PR:Q9Y2K6"/>
<dbReference type="Proteomes" id="UP000005640">
    <property type="component" value="Chromosome 9"/>
</dbReference>
<dbReference type="RNAct" id="Q9Y2K6">
    <property type="molecule type" value="protein"/>
</dbReference>
<dbReference type="Bgee" id="ENSG00000136878">
    <property type="expression patterns" value="Expressed in granulocyte and 145 other cell types or tissues"/>
</dbReference>
<dbReference type="GO" id="GO:0005813">
    <property type="term" value="C:centrosome"/>
    <property type="evidence" value="ECO:0000314"/>
    <property type="project" value="UniProtKB"/>
</dbReference>
<dbReference type="GO" id="GO:0005737">
    <property type="term" value="C:cytoplasm"/>
    <property type="evidence" value="ECO:0000305"/>
    <property type="project" value="UniProt"/>
</dbReference>
<dbReference type="GO" id="GO:0005829">
    <property type="term" value="C:cytosol"/>
    <property type="evidence" value="ECO:0000304"/>
    <property type="project" value="Reactome"/>
</dbReference>
<dbReference type="GO" id="GO:0005783">
    <property type="term" value="C:endoplasmic reticulum"/>
    <property type="evidence" value="ECO:0007669"/>
    <property type="project" value="UniProtKB-SubCell"/>
</dbReference>
<dbReference type="GO" id="GO:0048471">
    <property type="term" value="C:perinuclear region of cytoplasm"/>
    <property type="evidence" value="ECO:0007669"/>
    <property type="project" value="UniProtKB-SubCell"/>
</dbReference>
<dbReference type="GO" id="GO:0004843">
    <property type="term" value="F:cysteine-type deubiquitinase activity"/>
    <property type="evidence" value="ECO:0000314"/>
    <property type="project" value="UniProtKB"/>
</dbReference>
<dbReference type="GO" id="GO:0004197">
    <property type="term" value="F:cysteine-type endopeptidase activity"/>
    <property type="evidence" value="ECO:0000315"/>
    <property type="project" value="UniProtKB"/>
</dbReference>
<dbReference type="GO" id="GO:0001664">
    <property type="term" value="F:G protein-coupled receptor binding"/>
    <property type="evidence" value="ECO:0000353"/>
    <property type="project" value="UniProtKB"/>
</dbReference>
<dbReference type="GO" id="GO:0008270">
    <property type="term" value="F:zinc ion binding"/>
    <property type="evidence" value="ECO:0007669"/>
    <property type="project" value="UniProtKB-KW"/>
</dbReference>
<dbReference type="GO" id="GO:0140374">
    <property type="term" value="P:antiviral innate immune response"/>
    <property type="evidence" value="ECO:0000314"/>
    <property type="project" value="UniProt"/>
</dbReference>
<dbReference type="GO" id="GO:0006897">
    <property type="term" value="P:endocytosis"/>
    <property type="evidence" value="ECO:0007669"/>
    <property type="project" value="UniProtKB-KW"/>
</dbReference>
<dbReference type="GO" id="GO:0043124">
    <property type="term" value="P:negative regulation of canonical NF-kappaB signal transduction"/>
    <property type="evidence" value="ECO:0000314"/>
    <property type="project" value="UniProt"/>
</dbReference>
<dbReference type="GO" id="GO:0007399">
    <property type="term" value="P:nervous system development"/>
    <property type="evidence" value="ECO:0000318"/>
    <property type="project" value="GO_Central"/>
</dbReference>
<dbReference type="GO" id="GO:0010508">
    <property type="term" value="P:positive regulation of autophagy"/>
    <property type="evidence" value="ECO:0000314"/>
    <property type="project" value="UniProt"/>
</dbReference>
<dbReference type="GO" id="GO:0016579">
    <property type="term" value="P:protein deubiquitination"/>
    <property type="evidence" value="ECO:0000314"/>
    <property type="project" value="UniProtKB"/>
</dbReference>
<dbReference type="GO" id="GO:0071108">
    <property type="term" value="P:protein K48-linked deubiquitination"/>
    <property type="evidence" value="ECO:0000314"/>
    <property type="project" value="UniProtKB"/>
</dbReference>
<dbReference type="GO" id="GO:0070536">
    <property type="term" value="P:protein K63-linked deubiquitination"/>
    <property type="evidence" value="ECO:0000314"/>
    <property type="project" value="UniProtKB"/>
</dbReference>
<dbReference type="GO" id="GO:0006508">
    <property type="term" value="P:proteolysis"/>
    <property type="evidence" value="ECO:0007669"/>
    <property type="project" value="UniProtKB-KW"/>
</dbReference>
<dbReference type="GO" id="GO:0008277">
    <property type="term" value="P:regulation of G protein-coupled receptor signaling pathway"/>
    <property type="evidence" value="ECO:0000315"/>
    <property type="project" value="UniProtKB"/>
</dbReference>
<dbReference type="CDD" id="cd02674">
    <property type="entry name" value="Peptidase_C19R"/>
    <property type="match status" value="1"/>
</dbReference>
<dbReference type="FunFam" id="3.30.2230.10:FF:000001">
    <property type="entry name" value="Ubiquitinyl hydrolase 1"/>
    <property type="match status" value="1"/>
</dbReference>
<dbReference type="FunFam" id="3.30.2230.10:FF:000002">
    <property type="entry name" value="Ubiquitinyl hydrolase 1"/>
    <property type="match status" value="1"/>
</dbReference>
<dbReference type="FunFam" id="3.30.40.10:FF:000065">
    <property type="entry name" value="Ubiquitinyl hydrolase 1"/>
    <property type="match status" value="1"/>
</dbReference>
<dbReference type="FunFam" id="3.90.70.10:FF:000120">
    <property type="entry name" value="Ubiquitinyl hydrolase 1"/>
    <property type="match status" value="1"/>
</dbReference>
<dbReference type="Gene3D" id="3.90.70.10">
    <property type="entry name" value="Cysteine proteinases"/>
    <property type="match status" value="2"/>
</dbReference>
<dbReference type="Gene3D" id="3.30.2230.10">
    <property type="entry name" value="DUSP-like"/>
    <property type="match status" value="2"/>
</dbReference>
<dbReference type="Gene3D" id="3.30.40.10">
    <property type="entry name" value="Zinc/RING finger domain, C3HC4 (zinc finger)"/>
    <property type="match status" value="1"/>
</dbReference>
<dbReference type="InterPro" id="IPR035927">
    <property type="entry name" value="DUSP-like_sf"/>
</dbReference>
<dbReference type="InterPro" id="IPR038765">
    <property type="entry name" value="Papain-like_cys_pep_sf"/>
</dbReference>
<dbReference type="InterPro" id="IPR006615">
    <property type="entry name" value="Pept_C19_DUSP"/>
</dbReference>
<dbReference type="InterPro" id="IPR001394">
    <property type="entry name" value="Peptidase_C19_UCH"/>
</dbReference>
<dbReference type="InterPro" id="IPR050185">
    <property type="entry name" value="Ub_carboxyl-term_hydrolase"/>
</dbReference>
<dbReference type="InterPro" id="IPR018200">
    <property type="entry name" value="USP_CS"/>
</dbReference>
<dbReference type="InterPro" id="IPR028889">
    <property type="entry name" value="USP_dom"/>
</dbReference>
<dbReference type="InterPro" id="IPR013083">
    <property type="entry name" value="Znf_RING/FYVE/PHD"/>
</dbReference>
<dbReference type="InterPro" id="IPR001607">
    <property type="entry name" value="Znf_UBP"/>
</dbReference>
<dbReference type="PANTHER" id="PTHR21646">
    <property type="entry name" value="UBIQUITIN CARBOXYL-TERMINAL HYDROLASE"/>
    <property type="match status" value="1"/>
</dbReference>
<dbReference type="PANTHER" id="PTHR21646:SF13">
    <property type="entry name" value="UBIQUITIN CARBOXYL-TERMINAL HYDROLASE 20"/>
    <property type="match status" value="1"/>
</dbReference>
<dbReference type="Pfam" id="PF06337">
    <property type="entry name" value="DUSP"/>
    <property type="match status" value="2"/>
</dbReference>
<dbReference type="Pfam" id="PF00443">
    <property type="entry name" value="UCH"/>
    <property type="match status" value="1"/>
</dbReference>
<dbReference type="Pfam" id="PF02148">
    <property type="entry name" value="zf-UBP"/>
    <property type="match status" value="1"/>
</dbReference>
<dbReference type="SMART" id="SM00695">
    <property type="entry name" value="DUSP"/>
    <property type="match status" value="2"/>
</dbReference>
<dbReference type="SMART" id="SM00290">
    <property type="entry name" value="ZnF_UBP"/>
    <property type="match status" value="1"/>
</dbReference>
<dbReference type="SUPFAM" id="SSF54001">
    <property type="entry name" value="Cysteine proteinases"/>
    <property type="match status" value="1"/>
</dbReference>
<dbReference type="SUPFAM" id="SSF143791">
    <property type="entry name" value="DUSP-like"/>
    <property type="match status" value="2"/>
</dbReference>
<dbReference type="SUPFAM" id="SSF57850">
    <property type="entry name" value="RING/U-box"/>
    <property type="match status" value="1"/>
</dbReference>
<dbReference type="PROSITE" id="PS51283">
    <property type="entry name" value="DUSP"/>
    <property type="match status" value="2"/>
</dbReference>
<dbReference type="PROSITE" id="PS00972">
    <property type="entry name" value="USP_1"/>
    <property type="match status" value="1"/>
</dbReference>
<dbReference type="PROSITE" id="PS00973">
    <property type="entry name" value="USP_2"/>
    <property type="match status" value="1"/>
</dbReference>
<dbReference type="PROSITE" id="PS50235">
    <property type="entry name" value="USP_3"/>
    <property type="match status" value="1"/>
</dbReference>
<dbReference type="PROSITE" id="PS50271">
    <property type="entry name" value="ZF_UBP"/>
    <property type="match status" value="1"/>
</dbReference>